<dbReference type="EMBL" id="KT377416">
    <property type="protein sequence ID" value="AME17680.1"/>
    <property type="molecule type" value="mRNA"/>
</dbReference>
<dbReference type="GO" id="GO:0005576">
    <property type="term" value="C:extracellular region"/>
    <property type="evidence" value="ECO:0007669"/>
    <property type="project" value="UniProtKB-SubCell"/>
</dbReference>
<dbReference type="GO" id="GO:0099106">
    <property type="term" value="F:ion channel regulator activity"/>
    <property type="evidence" value="ECO:0007669"/>
    <property type="project" value="UniProtKB-KW"/>
</dbReference>
<dbReference type="GO" id="GO:0090729">
    <property type="term" value="F:toxin activity"/>
    <property type="evidence" value="ECO:0007669"/>
    <property type="project" value="UniProtKB-KW"/>
</dbReference>
<keyword id="KW-0027">Amidation</keyword>
<keyword id="KW-1015">Disulfide bond</keyword>
<keyword id="KW-0872">Ion channel impairing toxin</keyword>
<keyword id="KW-0528">Neurotoxin</keyword>
<keyword id="KW-0964">Secreted</keyword>
<keyword id="KW-0732">Signal</keyword>
<keyword id="KW-0800">Toxin</keyword>
<proteinExistence type="evidence at protein level"/>
<sequence>MHRSLAGSAVLMLLLLFALGNFVGVQPGLVTRDADNGQLMDNRRNLRLERKTMSLFKSLDKRADCSTYCFGMGICQSGCYCGPGHACMPNGR</sequence>
<name>CP94_CONIM</name>
<reference key="1">
    <citation type="journal article" date="2019" name="Mar. Drugs">
        <title>Transcriptomic-proteomic correlation in the predation-evoked venom of the cone snail, Conus imperialis.</title>
        <authorList>
            <person name="Jin A.H."/>
            <person name="Dutertre S."/>
            <person name="Dutt M."/>
            <person name="Lavergne V."/>
            <person name="Jones A."/>
            <person name="Lewis R.J."/>
            <person name="Alewood P.F."/>
        </authorList>
    </citation>
    <scope>NUCLEOTIDE SEQUENCE [MRNA]</scope>
    <scope>IDENTIFICATION BY MASS SPECTROMETRY</scope>
    <scope>SUBCELLULAR LOCATION</scope>
    <source>
        <tissue>Venom</tissue>
        <tissue>Venom duct</tissue>
    </source>
</reference>
<protein>
    <recommendedName>
        <fullName evidence="5">Conotoxin Im9.4</fullName>
    </recommendedName>
    <alternativeName>
        <fullName evidence="4 7">Conopeptide im022</fullName>
    </alternativeName>
</protein>
<organism>
    <name type="scientific">Conus imperialis</name>
    <name type="common">Imperial cone</name>
    <dbReference type="NCBI Taxonomy" id="35631"/>
    <lineage>
        <taxon>Eukaryota</taxon>
        <taxon>Metazoa</taxon>
        <taxon>Spiralia</taxon>
        <taxon>Lophotrochozoa</taxon>
        <taxon>Mollusca</taxon>
        <taxon>Gastropoda</taxon>
        <taxon>Caenogastropoda</taxon>
        <taxon>Neogastropoda</taxon>
        <taxon>Conoidea</taxon>
        <taxon>Conidae</taxon>
        <taxon>Conus</taxon>
        <taxon>Stephanoconus</taxon>
    </lineage>
</organism>
<accession>A0A125S9F6</accession>
<evidence type="ECO:0000250" key="1">
    <source>
        <dbReference type="UniProtKB" id="Q9GU57"/>
    </source>
</evidence>
<evidence type="ECO:0000255" key="2"/>
<evidence type="ECO:0000269" key="3">
    <source>
    </source>
</evidence>
<evidence type="ECO:0000303" key="4">
    <source>
    </source>
</evidence>
<evidence type="ECO:0000305" key="5"/>
<evidence type="ECO:0000305" key="6">
    <source>
    </source>
</evidence>
<evidence type="ECO:0000312" key="7">
    <source>
        <dbReference type="EMBL" id="AME17680.1"/>
    </source>
</evidence>
<feature type="signal peptide" evidence="2">
    <location>
        <begin position="1"/>
        <end position="20"/>
    </location>
</feature>
<feature type="propeptide" id="PRO_0000451006" evidence="5">
    <location>
        <begin position="21"/>
        <end position="62"/>
    </location>
</feature>
<feature type="peptide" id="PRO_5007179731" description="Conotoxin Im9.4" evidence="5">
    <location>
        <begin position="63"/>
        <end position="90"/>
    </location>
</feature>
<feature type="modified residue" description="Asparagine amide" evidence="1">
    <location>
        <position position="90"/>
    </location>
</feature>
<feature type="disulfide bond" evidence="1">
    <location>
        <begin position="65"/>
        <end position="79"/>
    </location>
</feature>
<feature type="disulfide bond" evidence="1">
    <location>
        <begin position="69"/>
        <end position="81"/>
    </location>
</feature>
<feature type="disulfide bond" evidence="1">
    <location>
        <begin position="75"/>
        <end position="87"/>
    </location>
</feature>
<comment type="function">
    <text evidence="5">Probable neurotoxin that inhibits ion channels.</text>
</comment>
<comment type="subcellular location">
    <subcellularLocation>
        <location evidence="3">Secreted</location>
    </subcellularLocation>
</comment>
<comment type="tissue specificity">
    <text evidence="6">Expressed by the venom duct.</text>
</comment>
<comment type="domain">
    <text evidence="5">The cysteine framework is IX (C-C-C-C-C-C).</text>
</comment>
<comment type="similarity">
    <text evidence="5">Belongs to the conotoxin P superfamily.</text>
</comment>